<evidence type="ECO:0000250" key="1"/>
<evidence type="ECO:0000255" key="2"/>
<evidence type="ECO:0000305" key="3"/>
<comment type="subcellular location">
    <subcellularLocation>
        <location evidence="1">Cell inner membrane</location>
        <topology evidence="1">Multi-pass membrane protein</topology>
    </subcellularLocation>
</comment>
<comment type="similarity">
    <text evidence="3">Belongs to the DedA family.</text>
</comment>
<organism>
    <name type="scientific">Shigella flexneri</name>
    <dbReference type="NCBI Taxonomy" id="623"/>
    <lineage>
        <taxon>Bacteria</taxon>
        <taxon>Pseudomonadati</taxon>
        <taxon>Pseudomonadota</taxon>
        <taxon>Gammaproteobacteria</taxon>
        <taxon>Enterobacterales</taxon>
        <taxon>Enterobacteriaceae</taxon>
        <taxon>Shigella</taxon>
    </lineage>
</organism>
<keyword id="KW-0997">Cell inner membrane</keyword>
<keyword id="KW-1003">Cell membrane</keyword>
<keyword id="KW-0472">Membrane</keyword>
<keyword id="KW-1185">Reference proteome</keyword>
<keyword id="KW-0812">Transmembrane</keyword>
<keyword id="KW-1133">Transmembrane helix</keyword>
<accession>P0AA66</accession>
<accession>P42614</accession>
<sequence length="220" mass="24585">MELLTQLLQALWAQDFETLANPSMIGMLYFVLFVILFLENGLLPAAFLPGDSLLVLVGVLIAKGAMGYPQTILLLTVAASLGCWVSYIQGRWLGNTRTVQNWLSHLPAHYHQRAHHLFHKHGLSALLIGRFIAFVRTLLPTIAGLSGLNNARFQFFNWMSGLLWVLILTTLGYMLGKTPVFLKYEDQLMSCLMLLPVVLLVFGLAGSLVVLWKKKYGNRG</sequence>
<protein>
    <recommendedName>
        <fullName>Inner membrane protein YqjA</fullName>
    </recommendedName>
</protein>
<feature type="chain" id="PRO_0000161420" description="Inner membrane protein YqjA">
    <location>
        <begin position="1"/>
        <end position="220"/>
    </location>
</feature>
<feature type="topological domain" description="Periplasmic" evidence="2">
    <location>
        <begin position="1"/>
        <end position="27"/>
    </location>
</feature>
<feature type="transmembrane region" description="Helical" evidence="2">
    <location>
        <begin position="28"/>
        <end position="48"/>
    </location>
</feature>
<feature type="topological domain" description="Cytoplasmic" evidence="2">
    <location>
        <begin position="49"/>
        <end position="52"/>
    </location>
</feature>
<feature type="transmembrane region" description="Helical" evidence="2">
    <location>
        <begin position="53"/>
        <end position="73"/>
    </location>
</feature>
<feature type="transmembrane region" description="Helical" evidence="2">
    <location>
        <begin position="74"/>
        <end position="94"/>
    </location>
</feature>
<feature type="topological domain" description="Cytoplasmic" evidence="2">
    <location>
        <begin position="95"/>
        <end position="154"/>
    </location>
</feature>
<feature type="transmembrane region" description="Helical" evidence="2">
    <location>
        <begin position="155"/>
        <end position="175"/>
    </location>
</feature>
<feature type="topological domain" description="Periplasmic" evidence="2">
    <location>
        <begin position="176"/>
        <end position="191"/>
    </location>
</feature>
<feature type="transmembrane region" description="Helical" evidence="2">
    <location>
        <begin position="192"/>
        <end position="212"/>
    </location>
</feature>
<feature type="topological domain" description="Cytoplasmic" evidence="2">
    <location>
        <begin position="213"/>
        <end position="220"/>
    </location>
</feature>
<proteinExistence type="inferred from homology"/>
<gene>
    <name type="primary">yqjA</name>
    <name type="ordered locus">SF3138</name>
    <name type="ordered locus">S3346</name>
</gene>
<dbReference type="EMBL" id="AE005674">
    <property type="protein sequence ID" value="AAN44610.1"/>
    <property type="molecule type" value="Genomic_DNA"/>
</dbReference>
<dbReference type="EMBL" id="AE014073">
    <property type="protein sequence ID" value="AAP18424.1"/>
    <property type="molecule type" value="Genomic_DNA"/>
</dbReference>
<dbReference type="RefSeq" id="NP_708903.1">
    <property type="nucleotide sequence ID" value="NC_004337.2"/>
</dbReference>
<dbReference type="RefSeq" id="WP_000422149.1">
    <property type="nucleotide sequence ID" value="NZ_WPGW01000077.1"/>
</dbReference>
<dbReference type="STRING" id="198214.SF3138"/>
<dbReference type="PaxDb" id="198214-SF3138"/>
<dbReference type="GeneID" id="1025266"/>
<dbReference type="GeneID" id="86947970"/>
<dbReference type="KEGG" id="sfl:SF3138"/>
<dbReference type="KEGG" id="sfx:S3346"/>
<dbReference type="PATRIC" id="fig|198214.7.peg.3726"/>
<dbReference type="HOGENOM" id="CLU_044208_6_2_6"/>
<dbReference type="Proteomes" id="UP000001006">
    <property type="component" value="Chromosome"/>
</dbReference>
<dbReference type="Proteomes" id="UP000002673">
    <property type="component" value="Chromosome"/>
</dbReference>
<dbReference type="GO" id="GO:0005886">
    <property type="term" value="C:plasma membrane"/>
    <property type="evidence" value="ECO:0007669"/>
    <property type="project" value="UniProtKB-SubCell"/>
</dbReference>
<dbReference type="InterPro" id="IPR032818">
    <property type="entry name" value="DedA-like"/>
</dbReference>
<dbReference type="InterPro" id="IPR032816">
    <property type="entry name" value="VTT_dom"/>
</dbReference>
<dbReference type="PANTHER" id="PTHR30353">
    <property type="entry name" value="INNER MEMBRANE PROTEIN DEDA-RELATED"/>
    <property type="match status" value="1"/>
</dbReference>
<dbReference type="PANTHER" id="PTHR30353:SF11">
    <property type="entry name" value="INNER MEMBRANE PROTEIN YQJA"/>
    <property type="match status" value="1"/>
</dbReference>
<dbReference type="Pfam" id="PF09335">
    <property type="entry name" value="VTT_dom"/>
    <property type="match status" value="1"/>
</dbReference>
<name>YQJA_SHIFL</name>
<reference key="1">
    <citation type="journal article" date="2002" name="Nucleic Acids Res.">
        <title>Genome sequence of Shigella flexneri 2a: insights into pathogenicity through comparison with genomes of Escherichia coli K12 and O157.</title>
        <authorList>
            <person name="Jin Q."/>
            <person name="Yuan Z."/>
            <person name="Xu J."/>
            <person name="Wang Y."/>
            <person name="Shen Y."/>
            <person name="Lu W."/>
            <person name="Wang J."/>
            <person name="Liu H."/>
            <person name="Yang J."/>
            <person name="Yang F."/>
            <person name="Zhang X."/>
            <person name="Zhang J."/>
            <person name="Yang G."/>
            <person name="Wu H."/>
            <person name="Qu D."/>
            <person name="Dong J."/>
            <person name="Sun L."/>
            <person name="Xue Y."/>
            <person name="Zhao A."/>
            <person name="Gao Y."/>
            <person name="Zhu J."/>
            <person name="Kan B."/>
            <person name="Ding K."/>
            <person name="Chen S."/>
            <person name="Cheng H."/>
            <person name="Yao Z."/>
            <person name="He B."/>
            <person name="Chen R."/>
            <person name="Ma D."/>
            <person name="Qiang B."/>
            <person name="Wen Y."/>
            <person name="Hou Y."/>
            <person name="Yu J."/>
        </authorList>
    </citation>
    <scope>NUCLEOTIDE SEQUENCE [LARGE SCALE GENOMIC DNA]</scope>
    <source>
        <strain>301 / Serotype 2a</strain>
    </source>
</reference>
<reference key="2">
    <citation type="journal article" date="2003" name="Infect. Immun.">
        <title>Complete genome sequence and comparative genomics of Shigella flexneri serotype 2a strain 2457T.</title>
        <authorList>
            <person name="Wei J."/>
            <person name="Goldberg M.B."/>
            <person name="Burland V."/>
            <person name="Venkatesan M.M."/>
            <person name="Deng W."/>
            <person name="Fournier G."/>
            <person name="Mayhew G.F."/>
            <person name="Plunkett G. III"/>
            <person name="Rose D.J."/>
            <person name="Darling A."/>
            <person name="Mau B."/>
            <person name="Perna N.T."/>
            <person name="Payne S.M."/>
            <person name="Runyen-Janecky L.J."/>
            <person name="Zhou S."/>
            <person name="Schwartz D.C."/>
            <person name="Blattner F.R."/>
        </authorList>
    </citation>
    <scope>NUCLEOTIDE SEQUENCE [LARGE SCALE GENOMIC DNA]</scope>
    <source>
        <strain>ATCC 700930 / 2457T / Serotype 2a</strain>
    </source>
</reference>